<protein>
    <recommendedName>
        <fullName>Rubredoxin-1</fullName>
        <shortName>Rdxs</shortName>
    </recommendedName>
</protein>
<proteinExistence type="evidence at protein level"/>
<accession>Q9HTK7</accession>
<comment type="function">
    <text evidence="4">Involved in the hydrocarbon hydroxylating system, which transfers electrons from NADH to rubredoxin reductase and then through rubredoxin to alkane 1 monooxygenase.</text>
</comment>
<comment type="cofactor">
    <cofactor evidence="1">
        <name>Fe(3+)</name>
        <dbReference type="ChEBI" id="CHEBI:29034"/>
    </cofactor>
    <text evidence="1">Binds 1 Fe(3+) ion per subunit.</text>
</comment>
<comment type="pathway">
    <text>Hydrocarbon metabolism; alkane degradation.</text>
</comment>
<comment type="subcellular location">
    <subcellularLocation>
        <location evidence="1">Cytoplasm</location>
    </subcellularLocation>
</comment>
<comment type="induction">
    <text evidence="3">Constitutively expressed.</text>
</comment>
<comment type="similarity">
    <text evidence="5">Belongs to the rubredoxin family.</text>
</comment>
<keyword id="KW-0963">Cytoplasm</keyword>
<keyword id="KW-0249">Electron transport</keyword>
<keyword id="KW-0408">Iron</keyword>
<keyword id="KW-0479">Metal-binding</keyword>
<keyword id="KW-1185">Reference proteome</keyword>
<keyword id="KW-0813">Transport</keyword>
<evidence type="ECO:0000250" key="1"/>
<evidence type="ECO:0000255" key="2">
    <source>
        <dbReference type="PROSITE-ProRule" id="PRU00241"/>
    </source>
</evidence>
<evidence type="ECO:0000269" key="3">
    <source>
    </source>
</evidence>
<evidence type="ECO:0000269" key="4">
    <source>
    </source>
</evidence>
<evidence type="ECO:0000305" key="5"/>
<sequence length="55" mass="6276">MKKWQCVVCGLIYDEAKGWPEEGIEAGTRWEDVPEDWLCPDCGVGKLDFEMIEIG</sequence>
<feature type="chain" id="PRO_0000392231" description="Rubredoxin-1">
    <location>
        <begin position="1"/>
        <end position="55"/>
    </location>
</feature>
<feature type="domain" description="Rubredoxin-like" evidence="2">
    <location>
        <begin position="1"/>
        <end position="54"/>
    </location>
</feature>
<feature type="binding site" evidence="2">
    <location>
        <position position="6"/>
    </location>
    <ligand>
        <name>Fe cation</name>
        <dbReference type="ChEBI" id="CHEBI:24875"/>
    </ligand>
</feature>
<feature type="binding site" evidence="2">
    <location>
        <position position="9"/>
    </location>
    <ligand>
        <name>Fe cation</name>
        <dbReference type="ChEBI" id="CHEBI:24875"/>
    </ligand>
</feature>
<feature type="binding site" evidence="2">
    <location>
        <position position="39"/>
    </location>
    <ligand>
        <name>Fe cation</name>
        <dbReference type="ChEBI" id="CHEBI:24875"/>
    </ligand>
</feature>
<feature type="binding site" evidence="2">
    <location>
        <position position="42"/>
    </location>
    <ligand>
        <name>Fe cation</name>
        <dbReference type="ChEBI" id="CHEBI:24875"/>
    </ligand>
</feature>
<dbReference type="EMBL" id="AE004091">
    <property type="protein sequence ID" value="AAG08736.1"/>
    <property type="molecule type" value="Genomic_DNA"/>
</dbReference>
<dbReference type="PIR" id="A82977">
    <property type="entry name" value="A82977"/>
</dbReference>
<dbReference type="RefSeq" id="NP_254038.1">
    <property type="nucleotide sequence ID" value="NC_002516.2"/>
</dbReference>
<dbReference type="RefSeq" id="WP_003098330.1">
    <property type="nucleotide sequence ID" value="NZ_QZGE01000020.1"/>
</dbReference>
<dbReference type="SMR" id="Q9HTK7"/>
<dbReference type="STRING" id="208964.PA5351"/>
<dbReference type="PaxDb" id="208964-PA5351"/>
<dbReference type="DNASU" id="879562"/>
<dbReference type="GeneID" id="879562"/>
<dbReference type="KEGG" id="pae:PA5351"/>
<dbReference type="PATRIC" id="fig|208964.12.peg.5608"/>
<dbReference type="PseudoCAP" id="PA5351"/>
<dbReference type="HOGENOM" id="CLU_128747_1_1_6"/>
<dbReference type="InParanoid" id="Q9HTK7"/>
<dbReference type="OrthoDB" id="9800607at2"/>
<dbReference type="PhylomeDB" id="Q9HTK7"/>
<dbReference type="BioCyc" id="PAER208964:G1FZ6-5473-MONOMER"/>
<dbReference type="UniPathway" id="UPA00191"/>
<dbReference type="Proteomes" id="UP000002438">
    <property type="component" value="Chromosome"/>
</dbReference>
<dbReference type="GO" id="GO:0005737">
    <property type="term" value="C:cytoplasm"/>
    <property type="evidence" value="ECO:0007669"/>
    <property type="project" value="UniProtKB-SubCell"/>
</dbReference>
<dbReference type="GO" id="GO:0009055">
    <property type="term" value="F:electron transfer activity"/>
    <property type="evidence" value="ECO:0000318"/>
    <property type="project" value="GO_Central"/>
</dbReference>
<dbReference type="GO" id="GO:0005506">
    <property type="term" value="F:iron ion binding"/>
    <property type="evidence" value="ECO:0007669"/>
    <property type="project" value="InterPro"/>
</dbReference>
<dbReference type="GO" id="GO:0043448">
    <property type="term" value="P:alkane catabolic process"/>
    <property type="evidence" value="ECO:0000318"/>
    <property type="project" value="GO_Central"/>
</dbReference>
<dbReference type="CDD" id="cd00730">
    <property type="entry name" value="rubredoxin"/>
    <property type="match status" value="1"/>
</dbReference>
<dbReference type="FunFam" id="2.20.28.10:FF:000001">
    <property type="entry name" value="Rubredoxin"/>
    <property type="match status" value="1"/>
</dbReference>
<dbReference type="Gene3D" id="2.20.28.10">
    <property type="match status" value="1"/>
</dbReference>
<dbReference type="InterPro" id="IPR024922">
    <property type="entry name" value="Rubredoxin"/>
</dbReference>
<dbReference type="InterPro" id="IPR024934">
    <property type="entry name" value="Rubredoxin-like_dom"/>
</dbReference>
<dbReference type="InterPro" id="IPR024935">
    <property type="entry name" value="Rubredoxin_dom"/>
</dbReference>
<dbReference type="InterPro" id="IPR050526">
    <property type="entry name" value="Rubredoxin_ET"/>
</dbReference>
<dbReference type="InterPro" id="IPR018527">
    <property type="entry name" value="Rubredoxin_Fe_BS"/>
</dbReference>
<dbReference type="PANTHER" id="PTHR47627">
    <property type="entry name" value="RUBREDOXIN"/>
    <property type="match status" value="1"/>
</dbReference>
<dbReference type="PANTHER" id="PTHR47627:SF1">
    <property type="entry name" value="RUBREDOXIN-1-RELATED"/>
    <property type="match status" value="1"/>
</dbReference>
<dbReference type="Pfam" id="PF00301">
    <property type="entry name" value="Rubredoxin"/>
    <property type="match status" value="1"/>
</dbReference>
<dbReference type="PIRSF" id="PIRSF000071">
    <property type="entry name" value="Rubredoxin"/>
    <property type="match status" value="1"/>
</dbReference>
<dbReference type="PRINTS" id="PR00163">
    <property type="entry name" value="RUBREDOXIN"/>
</dbReference>
<dbReference type="SUPFAM" id="SSF57802">
    <property type="entry name" value="Rubredoxin-like"/>
    <property type="match status" value="1"/>
</dbReference>
<dbReference type="PROSITE" id="PS00202">
    <property type="entry name" value="RUBREDOXIN"/>
    <property type="match status" value="1"/>
</dbReference>
<dbReference type="PROSITE" id="PS50903">
    <property type="entry name" value="RUBREDOXIN_LIKE"/>
    <property type="match status" value="1"/>
</dbReference>
<gene>
    <name type="primary">rubA1</name>
    <name type="synonym">alkG1</name>
    <name type="ordered locus">PA5351</name>
</gene>
<reference key="1">
    <citation type="journal article" date="2000" name="Nature">
        <title>Complete genome sequence of Pseudomonas aeruginosa PAO1, an opportunistic pathogen.</title>
        <authorList>
            <person name="Stover C.K."/>
            <person name="Pham X.-Q.T."/>
            <person name="Erwin A.L."/>
            <person name="Mizoguchi S.D."/>
            <person name="Warrener P."/>
            <person name="Hickey M.J."/>
            <person name="Brinkman F.S.L."/>
            <person name="Hufnagle W.O."/>
            <person name="Kowalik D.J."/>
            <person name="Lagrou M."/>
            <person name="Garber R.L."/>
            <person name="Goltry L."/>
            <person name="Tolentino E."/>
            <person name="Westbrock-Wadman S."/>
            <person name="Yuan Y."/>
            <person name="Brody L.L."/>
            <person name="Coulter S.N."/>
            <person name="Folger K.R."/>
            <person name="Kas A."/>
            <person name="Larbig K."/>
            <person name="Lim R.M."/>
            <person name="Smith K.A."/>
            <person name="Spencer D.H."/>
            <person name="Wong G.K.-S."/>
            <person name="Wu Z."/>
            <person name="Paulsen I.T."/>
            <person name="Reizer J."/>
            <person name="Saier M.H. Jr."/>
            <person name="Hancock R.E.W."/>
            <person name="Lory S."/>
            <person name="Olson M.V."/>
        </authorList>
    </citation>
    <scope>NUCLEOTIDE SEQUENCE [LARGE SCALE GENOMIC DNA]</scope>
    <source>
        <strain>ATCC 15692 / DSM 22644 / CIP 104116 / JCM 14847 / LMG 12228 / 1C / PRS 101 / PAO1</strain>
    </source>
</reference>
<reference key="2">
    <citation type="journal article" date="2003" name="Antonie Van Leeuwenhoek">
        <title>Functional characterization of genes involved in alkane oxidation by Pseudomonas aeruginosa.</title>
        <authorList>
            <person name="Smits T.H."/>
            <person name="Witholt B."/>
            <person name="van Beilen J.B."/>
        </authorList>
    </citation>
    <scope>FUNCTION IN ALKANE DEGRADATION</scope>
</reference>
<reference key="3">
    <citation type="journal article" date="2003" name="J. Bacteriol.">
        <title>Differential expression of the components of the two alkane hydroxylases from Pseudomonas aeruginosa.</title>
        <authorList>
            <person name="Marin M.M."/>
            <person name="Yuste L."/>
            <person name="Rojo F."/>
        </authorList>
    </citation>
    <scope>INDUCTION</scope>
    <source>
        <strain>ATCC 15692 / DSM 22644 / CIP 104116 / JCM 14847 / LMG 12228 / 1C / PRS 101 / PAO1</strain>
    </source>
</reference>
<name>RUBR1_PSEAE</name>
<organism>
    <name type="scientific">Pseudomonas aeruginosa (strain ATCC 15692 / DSM 22644 / CIP 104116 / JCM 14847 / LMG 12228 / 1C / PRS 101 / PAO1)</name>
    <dbReference type="NCBI Taxonomy" id="208964"/>
    <lineage>
        <taxon>Bacteria</taxon>
        <taxon>Pseudomonadati</taxon>
        <taxon>Pseudomonadota</taxon>
        <taxon>Gammaproteobacteria</taxon>
        <taxon>Pseudomonadales</taxon>
        <taxon>Pseudomonadaceae</taxon>
        <taxon>Pseudomonas</taxon>
    </lineage>
</organism>